<dbReference type="EMBL" id="CP000805">
    <property type="protein sequence ID" value="ACD70663.1"/>
    <property type="molecule type" value="Genomic_DNA"/>
</dbReference>
<dbReference type="RefSeq" id="WP_010881685.1">
    <property type="nucleotide sequence ID" value="NC_021508.1"/>
</dbReference>
<dbReference type="SMR" id="B2S2I4"/>
<dbReference type="GeneID" id="93876029"/>
<dbReference type="KEGG" id="tpp:TPASS_0237"/>
<dbReference type="PATRIC" id="fig|455434.6.peg.241"/>
<dbReference type="Proteomes" id="UP000001202">
    <property type="component" value="Chromosome"/>
</dbReference>
<dbReference type="GO" id="GO:0022625">
    <property type="term" value="C:cytosolic large ribosomal subunit"/>
    <property type="evidence" value="ECO:0007669"/>
    <property type="project" value="TreeGrafter"/>
</dbReference>
<dbReference type="GO" id="GO:0070180">
    <property type="term" value="F:large ribosomal subunit rRNA binding"/>
    <property type="evidence" value="ECO:0007669"/>
    <property type="project" value="UniProtKB-UniRule"/>
</dbReference>
<dbReference type="GO" id="GO:0003735">
    <property type="term" value="F:structural constituent of ribosome"/>
    <property type="evidence" value="ECO:0007669"/>
    <property type="project" value="InterPro"/>
</dbReference>
<dbReference type="GO" id="GO:0006412">
    <property type="term" value="P:translation"/>
    <property type="evidence" value="ECO:0007669"/>
    <property type="project" value="UniProtKB-UniRule"/>
</dbReference>
<dbReference type="CDD" id="cd00349">
    <property type="entry name" value="Ribosomal_L11"/>
    <property type="match status" value="1"/>
</dbReference>
<dbReference type="FunFam" id="1.10.10.250:FF:000001">
    <property type="entry name" value="50S ribosomal protein L11"/>
    <property type="match status" value="1"/>
</dbReference>
<dbReference type="FunFam" id="3.30.1550.10:FF:000006">
    <property type="entry name" value="50S ribosomal protein L11"/>
    <property type="match status" value="1"/>
</dbReference>
<dbReference type="Gene3D" id="1.10.10.250">
    <property type="entry name" value="Ribosomal protein L11, C-terminal domain"/>
    <property type="match status" value="1"/>
</dbReference>
<dbReference type="Gene3D" id="3.30.1550.10">
    <property type="entry name" value="Ribosomal protein L11/L12, N-terminal domain"/>
    <property type="match status" value="1"/>
</dbReference>
<dbReference type="HAMAP" id="MF_00736">
    <property type="entry name" value="Ribosomal_uL11"/>
    <property type="match status" value="1"/>
</dbReference>
<dbReference type="InterPro" id="IPR000911">
    <property type="entry name" value="Ribosomal_uL11"/>
</dbReference>
<dbReference type="InterPro" id="IPR006519">
    <property type="entry name" value="Ribosomal_uL11_bac-typ"/>
</dbReference>
<dbReference type="InterPro" id="IPR020783">
    <property type="entry name" value="Ribosomal_uL11_C"/>
</dbReference>
<dbReference type="InterPro" id="IPR036769">
    <property type="entry name" value="Ribosomal_uL11_C_sf"/>
</dbReference>
<dbReference type="InterPro" id="IPR020785">
    <property type="entry name" value="Ribosomal_uL11_CS"/>
</dbReference>
<dbReference type="InterPro" id="IPR020784">
    <property type="entry name" value="Ribosomal_uL11_N"/>
</dbReference>
<dbReference type="InterPro" id="IPR036796">
    <property type="entry name" value="Ribosomal_uL11_N_sf"/>
</dbReference>
<dbReference type="NCBIfam" id="TIGR01632">
    <property type="entry name" value="L11_bact"/>
    <property type="match status" value="1"/>
</dbReference>
<dbReference type="PANTHER" id="PTHR11661">
    <property type="entry name" value="60S RIBOSOMAL PROTEIN L12"/>
    <property type="match status" value="1"/>
</dbReference>
<dbReference type="PANTHER" id="PTHR11661:SF1">
    <property type="entry name" value="LARGE RIBOSOMAL SUBUNIT PROTEIN UL11M"/>
    <property type="match status" value="1"/>
</dbReference>
<dbReference type="Pfam" id="PF00298">
    <property type="entry name" value="Ribosomal_L11"/>
    <property type="match status" value="1"/>
</dbReference>
<dbReference type="Pfam" id="PF03946">
    <property type="entry name" value="Ribosomal_L11_N"/>
    <property type="match status" value="1"/>
</dbReference>
<dbReference type="SMART" id="SM00649">
    <property type="entry name" value="RL11"/>
    <property type="match status" value="1"/>
</dbReference>
<dbReference type="SUPFAM" id="SSF54747">
    <property type="entry name" value="Ribosomal L11/L12e N-terminal domain"/>
    <property type="match status" value="1"/>
</dbReference>
<dbReference type="SUPFAM" id="SSF46906">
    <property type="entry name" value="Ribosomal protein L11, C-terminal domain"/>
    <property type="match status" value="1"/>
</dbReference>
<dbReference type="PROSITE" id="PS00359">
    <property type="entry name" value="RIBOSOMAL_L11"/>
    <property type="match status" value="1"/>
</dbReference>
<sequence>MAAKKKVVTQIKLQCPAGKATPAPPVGPALGPHGVSAPQFVQQFNDRTKSMEPGLVVPVVVTVYSDKSFSFVLKTPPAAVLIRKACGIEKGSTNSVKQKVARLSLAQLTEIAQVKLPDMSALTLDAAKRIIAGTARSMGVEVERSL</sequence>
<feature type="chain" id="PRO_1000195742" description="Large ribosomal subunit protein uL11">
    <location>
        <begin position="1"/>
        <end position="146"/>
    </location>
</feature>
<evidence type="ECO:0000255" key="1">
    <source>
        <dbReference type="HAMAP-Rule" id="MF_00736"/>
    </source>
</evidence>
<evidence type="ECO:0000305" key="2"/>
<protein>
    <recommendedName>
        <fullName evidence="1">Large ribosomal subunit protein uL11</fullName>
    </recommendedName>
    <alternativeName>
        <fullName evidence="2">50S ribosomal protein L11</fullName>
    </alternativeName>
</protein>
<proteinExistence type="inferred from homology"/>
<keyword id="KW-0488">Methylation</keyword>
<keyword id="KW-0687">Ribonucleoprotein</keyword>
<keyword id="KW-0689">Ribosomal protein</keyword>
<keyword id="KW-0694">RNA-binding</keyword>
<keyword id="KW-0699">rRNA-binding</keyword>
<organism>
    <name type="scientific">Treponema pallidum subsp. pallidum (strain SS14)</name>
    <dbReference type="NCBI Taxonomy" id="455434"/>
    <lineage>
        <taxon>Bacteria</taxon>
        <taxon>Pseudomonadati</taxon>
        <taxon>Spirochaetota</taxon>
        <taxon>Spirochaetia</taxon>
        <taxon>Spirochaetales</taxon>
        <taxon>Treponemataceae</taxon>
        <taxon>Treponema</taxon>
    </lineage>
</organism>
<comment type="function">
    <text evidence="1">Forms part of the ribosomal stalk which helps the ribosome interact with GTP-bound translation factors.</text>
</comment>
<comment type="subunit">
    <text evidence="1">Part of the ribosomal stalk of the 50S ribosomal subunit. Interacts with L10 and the large rRNA to form the base of the stalk. L10 forms an elongated spine to which L12 dimers bind in a sequential fashion forming a multimeric L10(L12)X complex.</text>
</comment>
<comment type="PTM">
    <text evidence="1">One or more lysine residues are methylated.</text>
</comment>
<comment type="similarity">
    <text evidence="1">Belongs to the universal ribosomal protein uL11 family.</text>
</comment>
<accession>B2S2I4</accession>
<reference key="1">
    <citation type="journal article" date="2008" name="BMC Microbiol.">
        <title>Complete genome sequence of Treponema pallidum ssp. pallidum strain SS14 determined with oligonucleotide arrays.</title>
        <authorList>
            <person name="Matejkova P."/>
            <person name="Strouhal M."/>
            <person name="Smajs D."/>
            <person name="Norris S.J."/>
            <person name="Palzkill T."/>
            <person name="Petrosino J.F."/>
            <person name="Sodergren E."/>
            <person name="Norton J.E."/>
            <person name="Singh J."/>
            <person name="Richmond T.A."/>
            <person name="Molla M.N."/>
            <person name="Albert T.J."/>
            <person name="Weinstock G.M."/>
        </authorList>
    </citation>
    <scope>NUCLEOTIDE SEQUENCE [LARGE SCALE GENOMIC DNA]</scope>
    <source>
        <strain>SS14</strain>
    </source>
</reference>
<gene>
    <name evidence="1" type="primary">rplK</name>
    <name type="ordered locus">TPASS_0237</name>
</gene>
<name>RL11_TREPS</name>